<keyword id="KW-0025">Alternative splicing</keyword>
<keyword id="KW-0497">Mitogen</keyword>
<keyword id="KW-0597">Phosphoprotein</keyword>
<keyword id="KW-1185">Reference proteome</keyword>
<protein>
    <recommendedName>
        <fullName>GRB2-associated and regulator of MAPK protein</fullName>
    </recommendedName>
    <alternativeName>
        <fullName>GRB2-associated and regulator of MAPK1</fullName>
    </alternativeName>
</protein>
<gene>
    <name type="primary">Garem1</name>
    <name type="synonym">Fam59a</name>
    <name type="synonym">Garem</name>
    <name type="synonym">Gm944</name>
    <name type="synonym">Kiaa4238</name>
</gene>
<comment type="function">
    <text evidence="1">Acts as an adapter protein that plays a role in intracellular signaling cascades triggered either by the cell surface activated epidermal growth factor receptor and/or cytoplasmic protein tyrosine kinases. Promotes activation of the MAPK/ERK signaling pathway. Plays a role in the regulation of cell proliferation (By similarity).</text>
</comment>
<comment type="subunit">
    <text evidence="1">Interacts with EGFR. Interacts (via proline-rich domain and phosphorylated at Tyr-105 and Tyr-453) with GRB2 (via SH3 domains); the interaction occurs upon EGF stimulation. Interacts (phosphorylated at Tyr-453) with PTPN11; the interaction increases MAPK/ERK activity and does not affect the GRB2/SOS complex formation (By similarity).</text>
</comment>
<comment type="alternative products">
    <event type="alternative splicing"/>
    <isoform>
        <id>Q3UFT3-1</id>
        <name>1</name>
        <sequence type="displayed"/>
    </isoform>
    <isoform>
        <id>Q3UFT3-2</id>
        <name>2</name>
        <sequence type="described" ref="VSP_023049 VSP_023050"/>
    </isoform>
</comment>
<comment type="PTM">
    <text evidence="1">On EGF stimulation, phosphorylated on Tyr-105 and Tyr-453.</text>
</comment>
<comment type="similarity">
    <text evidence="5">Belongs to the GAREM family.</text>
</comment>
<comment type="sequence caution" evidence="5">
    <conflict type="erroneous initiation">
        <sequence resource="EMBL-CDS" id="BAD90542"/>
    </conflict>
    <text>Truncated N-terminus.</text>
</comment>
<dbReference type="EMBL" id="AK148318">
    <property type="protein sequence ID" value="BAE28477.1"/>
    <property type="molecule type" value="mRNA"/>
</dbReference>
<dbReference type="EMBL" id="AK162177">
    <property type="protein sequence ID" value="BAE36773.1"/>
    <property type="molecule type" value="mRNA"/>
</dbReference>
<dbReference type="EMBL" id="AK220564">
    <property type="protein sequence ID" value="BAD90542.1"/>
    <property type="status" value="ALT_INIT"/>
    <property type="molecule type" value="mRNA"/>
</dbReference>
<dbReference type="EMBL" id="AC127570">
    <property type="status" value="NOT_ANNOTATED_CDS"/>
    <property type="molecule type" value="Genomic_DNA"/>
</dbReference>
<dbReference type="EMBL" id="AC158774">
    <property type="status" value="NOT_ANNOTATED_CDS"/>
    <property type="molecule type" value="Genomic_DNA"/>
</dbReference>
<dbReference type="EMBL" id="CH466557">
    <property type="protein sequence ID" value="EDK96964.1"/>
    <property type="molecule type" value="Genomic_DNA"/>
</dbReference>
<dbReference type="EMBL" id="BC049983">
    <property type="protein sequence ID" value="AAH49983.1"/>
    <property type="molecule type" value="mRNA"/>
</dbReference>
<dbReference type="CCDS" id="CCDS29091.1">
    <molecule id="Q3UFT3-1"/>
</dbReference>
<dbReference type="RefSeq" id="NP_001028617.2">
    <molecule id="Q3UFT3-1"/>
    <property type="nucleotide sequence ID" value="NM_001033445.3"/>
</dbReference>
<dbReference type="SMR" id="Q3UFT3"/>
<dbReference type="FunCoup" id="Q3UFT3">
    <property type="interactions" value="64"/>
</dbReference>
<dbReference type="IntAct" id="Q3UFT3">
    <property type="interactions" value="1"/>
</dbReference>
<dbReference type="STRING" id="10090.ENSMUSP00000048914"/>
<dbReference type="GlyGen" id="Q3UFT3">
    <property type="glycosylation" value="2 sites"/>
</dbReference>
<dbReference type="iPTMnet" id="Q3UFT3"/>
<dbReference type="PhosphoSitePlus" id="Q3UFT3"/>
<dbReference type="PaxDb" id="10090-ENSMUSP00000048914"/>
<dbReference type="ProteomicsDB" id="271669">
    <molecule id="Q3UFT3-1"/>
</dbReference>
<dbReference type="ProteomicsDB" id="271670">
    <molecule id="Q3UFT3-2"/>
</dbReference>
<dbReference type="Pumba" id="Q3UFT3"/>
<dbReference type="Antibodypedia" id="41891">
    <property type="antibodies" value="108 antibodies from 23 providers"/>
</dbReference>
<dbReference type="Ensembl" id="ENSMUST00000049260.7">
    <molecule id="Q3UFT3-1"/>
    <property type="protein sequence ID" value="ENSMUSP00000048914.7"/>
    <property type="gene ID" value="ENSMUSG00000042680.9"/>
</dbReference>
<dbReference type="Ensembl" id="ENSMUST00000234115.2">
    <molecule id="Q3UFT3-2"/>
    <property type="protein sequence ID" value="ENSMUSP00000157254.2"/>
    <property type="gene ID" value="ENSMUSG00000042680.9"/>
</dbReference>
<dbReference type="GeneID" id="381126"/>
<dbReference type="KEGG" id="mmu:381126"/>
<dbReference type="UCSC" id="uc008efg.1">
    <molecule id="Q3UFT3-1"/>
    <property type="organism name" value="mouse"/>
</dbReference>
<dbReference type="UCSC" id="uc008efh.1">
    <molecule id="Q3UFT3-2"/>
    <property type="organism name" value="mouse"/>
</dbReference>
<dbReference type="AGR" id="MGI:2685790"/>
<dbReference type="CTD" id="64762"/>
<dbReference type="MGI" id="MGI:2685790">
    <property type="gene designation" value="Garem1"/>
</dbReference>
<dbReference type="VEuPathDB" id="HostDB:ENSMUSG00000042680"/>
<dbReference type="eggNOG" id="ENOG502QRDN">
    <property type="taxonomic scope" value="Eukaryota"/>
</dbReference>
<dbReference type="GeneTree" id="ENSGT00530000063834"/>
<dbReference type="HOGENOM" id="CLU_014784_0_0_1"/>
<dbReference type="InParanoid" id="Q3UFT3"/>
<dbReference type="OMA" id="RADWNED"/>
<dbReference type="OrthoDB" id="6077228at2759"/>
<dbReference type="PhylomeDB" id="Q3UFT3"/>
<dbReference type="TreeFam" id="TF329726"/>
<dbReference type="BioGRID-ORCS" id="381126">
    <property type="hits" value="4 hits in 79 CRISPR screens"/>
</dbReference>
<dbReference type="ChiTaRS" id="Garem">
    <property type="organism name" value="mouse"/>
</dbReference>
<dbReference type="PRO" id="PR:Q3UFT3"/>
<dbReference type="Proteomes" id="UP000000589">
    <property type="component" value="Chromosome 18"/>
</dbReference>
<dbReference type="RNAct" id="Q3UFT3">
    <property type="molecule type" value="protein"/>
</dbReference>
<dbReference type="Bgee" id="ENSMUSG00000042680">
    <property type="expression patterns" value="Expressed in caudate-putamen and 228 other cell types or tissues"/>
</dbReference>
<dbReference type="GO" id="GO:0070064">
    <property type="term" value="F:proline-rich region binding"/>
    <property type="evidence" value="ECO:0000250"/>
    <property type="project" value="UniProtKB"/>
</dbReference>
<dbReference type="GO" id="GO:0008283">
    <property type="term" value="P:cell population proliferation"/>
    <property type="evidence" value="ECO:0000250"/>
    <property type="project" value="MGI"/>
</dbReference>
<dbReference type="GO" id="GO:0071364">
    <property type="term" value="P:cellular response to epidermal growth factor stimulus"/>
    <property type="evidence" value="ECO:0000250"/>
    <property type="project" value="UniProtKB"/>
</dbReference>
<dbReference type="GO" id="GO:0007173">
    <property type="term" value="P:epidermal growth factor receptor signaling pathway"/>
    <property type="evidence" value="ECO:0000250"/>
    <property type="project" value="UniProtKB"/>
</dbReference>
<dbReference type="GO" id="GO:0035264">
    <property type="term" value="P:multicellular organism growth"/>
    <property type="evidence" value="ECO:0000315"/>
    <property type="project" value="MGI"/>
</dbReference>
<dbReference type="GO" id="GO:0051781">
    <property type="term" value="P:positive regulation of cell division"/>
    <property type="evidence" value="ECO:0007669"/>
    <property type="project" value="UniProtKB-KW"/>
</dbReference>
<dbReference type="GO" id="GO:0008284">
    <property type="term" value="P:positive regulation of cell population proliferation"/>
    <property type="evidence" value="ECO:0000250"/>
    <property type="project" value="UniProtKB"/>
</dbReference>
<dbReference type="GO" id="GO:0070374">
    <property type="term" value="P:positive regulation of ERK1 and ERK2 cascade"/>
    <property type="evidence" value="ECO:0000315"/>
    <property type="project" value="MGI"/>
</dbReference>
<dbReference type="GO" id="GO:0070849">
    <property type="term" value="P:response to epidermal growth factor"/>
    <property type="evidence" value="ECO:0000250"/>
    <property type="project" value="MGI"/>
</dbReference>
<dbReference type="CDD" id="cd09525">
    <property type="entry name" value="SAM_GAREM"/>
    <property type="match status" value="1"/>
</dbReference>
<dbReference type="FunFam" id="1.10.150.50:FF:000042">
    <property type="entry name" value="GRB2-associated and regulator of MAPK protein 1"/>
    <property type="match status" value="1"/>
</dbReference>
<dbReference type="Gene3D" id="1.10.150.50">
    <property type="entry name" value="Transcription Factor, Ets-1"/>
    <property type="match status" value="1"/>
</dbReference>
<dbReference type="InterPro" id="IPR025946">
    <property type="entry name" value="CABIT_dom"/>
</dbReference>
<dbReference type="InterPro" id="IPR052281">
    <property type="entry name" value="GAREM"/>
</dbReference>
<dbReference type="InterPro" id="IPR013761">
    <property type="entry name" value="SAM/pointed_sf"/>
</dbReference>
<dbReference type="PANTHER" id="PTHR14454:SF6">
    <property type="entry name" value="GRB2-ASSOCIATED AND REGULATOR OF MAPK PROTEIN 1"/>
    <property type="match status" value="1"/>
</dbReference>
<dbReference type="PANTHER" id="PTHR14454">
    <property type="entry name" value="GRB2-ASSOCIATED AND REGULATOR OF MAPK PROTEIN FAMILY MEMBER"/>
    <property type="match status" value="1"/>
</dbReference>
<dbReference type="Pfam" id="PF12736">
    <property type="entry name" value="CABIT"/>
    <property type="match status" value="1"/>
</dbReference>
<dbReference type="SUPFAM" id="SSF47769">
    <property type="entry name" value="SAM/Pointed domain"/>
    <property type="match status" value="1"/>
</dbReference>
<sequence length="876" mass="97250">MDPAPSLGCSLKDVKWSPVAMPLDLLVSTYRLPQIARLDSGECVEGLRENDFLLIHSCRQWTTITAHSLEEGHYVIGPKIEIPVHYAGQFKLLEQDRDIKEPVQYFNSVEEVAKAFPERVYVMEEITFNVKVASGECNEDTEVYNITLCTGDELTLMGQAEILYAKTFKEKSRLNTIFKKIGKLNSISKLGKGKMPCLICMNHRTNESISLPFQCKGRFSTRSPLELQMQEGEHTIRNIVEKTRLPVNVTVPSPPPRNPYDLHFIREGHRYKFVNIQTKTVVVCCVLRNNKILPMHFPLHLTVPKFSLPEHQVKGDMWPETLVHHWLGICQEQFDIDEYSRAVRDVKTDWNEDCKSPKKGRCSGHNHLPNSLSYARDELTQSFHRLSVCVYGNNLHGNSEVNLHGCRDLGGEWAPFPHDILPYQDSGDSGSDYLFPEANEESAGIPGKTEVPYEELWLEEGKPSRQPLTRSLSEKSRCDTLRGSTRSTCAPSSPPTPATLGATIKSSEIALPPPPVPPKSEAVREECRLLNAPPVPPRSAKPLSTSPSIPPRTVKPVRPQTRSPSPTLSYYSSGLHNIITQSDTSPPNSAPVSCYPCTRVKSDSVDPKSPFGSPSAEALSSRLSWPNHYSGASENQTRSDFLLDPSRSYSYPRQKTPGTPKRTCPAPFDFEGCELLGSPPSTTSAEFSSSGVPSCPKSASYCLENSEDNSFAAGMTKQSVSCPALPPRAPKPVEQKATPETSPLPLKIDGAEEDPTAGSLDLSEDQYFVRKGMQDIFSVSYPFSSPLHLQLAPRSCGDGSPWQPPADLSGLSIEEVSKSLRFIGLSEDVIAFFVTEKIDGNLLVQLTEEILSEDFKLSKLQVKKILQFINGWRPKI</sequence>
<name>GARE1_MOUSE</name>
<evidence type="ECO:0000250" key="1"/>
<evidence type="ECO:0000250" key="2">
    <source>
        <dbReference type="UniProtKB" id="Q9H706"/>
    </source>
</evidence>
<evidence type="ECO:0000256" key="3">
    <source>
        <dbReference type="SAM" id="MobiDB-lite"/>
    </source>
</evidence>
<evidence type="ECO:0000303" key="4">
    <source ref="2"/>
</evidence>
<evidence type="ECO:0000305" key="5"/>
<evidence type="ECO:0007744" key="6">
    <source>
    </source>
</evidence>
<feature type="chain" id="PRO_0000277648" description="GRB2-associated and regulator of MAPK protein">
    <location>
        <begin position="1"/>
        <end position="876"/>
    </location>
</feature>
<feature type="domain" description="SAM">
    <location>
        <begin position="811"/>
        <end position="876"/>
    </location>
</feature>
<feature type="region of interest" description="CABIT">
    <location>
        <begin position="12"/>
        <end position="320"/>
    </location>
</feature>
<feature type="region of interest" description="Disordered" evidence="3">
    <location>
        <begin position="427"/>
        <end position="448"/>
    </location>
</feature>
<feature type="region of interest" description="Disordered" evidence="3">
    <location>
        <begin position="460"/>
        <end position="501"/>
    </location>
</feature>
<feature type="region of interest" description="Necessary for interaction with GRB2" evidence="1">
    <location>
        <begin position="498"/>
        <end position="550"/>
    </location>
</feature>
<feature type="region of interest" description="Disordered" evidence="3">
    <location>
        <begin position="530"/>
        <end position="572"/>
    </location>
</feature>
<feature type="region of interest" description="Disordered" evidence="3">
    <location>
        <begin position="630"/>
        <end position="664"/>
    </location>
</feature>
<feature type="region of interest" description="Disordered" evidence="3">
    <location>
        <begin position="722"/>
        <end position="759"/>
    </location>
</feature>
<feature type="compositionally biased region" description="Polar residues" evidence="3">
    <location>
        <begin position="560"/>
        <end position="572"/>
    </location>
</feature>
<feature type="compositionally biased region" description="Polar residues" evidence="3">
    <location>
        <begin position="630"/>
        <end position="639"/>
    </location>
</feature>
<feature type="compositionally biased region" description="Polar residues" evidence="3">
    <location>
        <begin position="647"/>
        <end position="657"/>
    </location>
</feature>
<feature type="modified residue" description="Phosphotyrosine" evidence="2">
    <location>
        <position position="105"/>
    </location>
</feature>
<feature type="modified residue" description="Phosphotyrosine" evidence="2">
    <location>
        <position position="453"/>
    </location>
</feature>
<feature type="modified residue" description="Phosphoserine" evidence="6">
    <location>
        <position position="609"/>
    </location>
</feature>
<feature type="modified residue" description="Phosphoserine" evidence="6">
    <location>
        <position position="613"/>
    </location>
</feature>
<feature type="splice variant" id="VSP_023049" description="In isoform 2." evidence="4">
    <original>I</original>
    <variation>M</variation>
    <location>
        <position position="578"/>
    </location>
</feature>
<feature type="splice variant" id="VSP_023050" description="In isoform 2." evidence="4">
    <location>
        <begin position="579"/>
        <end position="876"/>
    </location>
</feature>
<feature type="sequence conflict" description="In Ref. 1; BAE28477." evidence="5" ref="1">
    <original>H</original>
    <variation>N</variation>
    <location>
        <position position="324"/>
    </location>
</feature>
<feature type="sequence conflict" description="In Ref. 1; BAE28477." evidence="5" ref="1">
    <original>P</original>
    <variation>H</variation>
    <location>
        <position position="652"/>
    </location>
</feature>
<feature type="sequence conflict" description="In Ref. 1; BAE36773." evidence="5" ref="1">
    <original>L</original>
    <variation>Q</variation>
    <location>
        <position position="857"/>
    </location>
</feature>
<reference key="1">
    <citation type="journal article" date="2005" name="Science">
        <title>The transcriptional landscape of the mammalian genome.</title>
        <authorList>
            <person name="Carninci P."/>
            <person name="Kasukawa T."/>
            <person name="Katayama S."/>
            <person name="Gough J."/>
            <person name="Frith M.C."/>
            <person name="Maeda N."/>
            <person name="Oyama R."/>
            <person name="Ravasi T."/>
            <person name="Lenhard B."/>
            <person name="Wells C."/>
            <person name="Kodzius R."/>
            <person name="Shimokawa K."/>
            <person name="Bajic V.B."/>
            <person name="Brenner S.E."/>
            <person name="Batalov S."/>
            <person name="Forrest A.R."/>
            <person name="Zavolan M."/>
            <person name="Davis M.J."/>
            <person name="Wilming L.G."/>
            <person name="Aidinis V."/>
            <person name="Allen J.E."/>
            <person name="Ambesi-Impiombato A."/>
            <person name="Apweiler R."/>
            <person name="Aturaliya R.N."/>
            <person name="Bailey T.L."/>
            <person name="Bansal M."/>
            <person name="Baxter L."/>
            <person name="Beisel K.W."/>
            <person name="Bersano T."/>
            <person name="Bono H."/>
            <person name="Chalk A.M."/>
            <person name="Chiu K.P."/>
            <person name="Choudhary V."/>
            <person name="Christoffels A."/>
            <person name="Clutterbuck D.R."/>
            <person name="Crowe M.L."/>
            <person name="Dalla E."/>
            <person name="Dalrymple B.P."/>
            <person name="de Bono B."/>
            <person name="Della Gatta G."/>
            <person name="di Bernardo D."/>
            <person name="Down T."/>
            <person name="Engstrom P."/>
            <person name="Fagiolini M."/>
            <person name="Faulkner G."/>
            <person name="Fletcher C.F."/>
            <person name="Fukushima T."/>
            <person name="Furuno M."/>
            <person name="Futaki S."/>
            <person name="Gariboldi M."/>
            <person name="Georgii-Hemming P."/>
            <person name="Gingeras T.R."/>
            <person name="Gojobori T."/>
            <person name="Green R.E."/>
            <person name="Gustincich S."/>
            <person name="Harbers M."/>
            <person name="Hayashi Y."/>
            <person name="Hensch T.K."/>
            <person name="Hirokawa N."/>
            <person name="Hill D."/>
            <person name="Huminiecki L."/>
            <person name="Iacono M."/>
            <person name="Ikeo K."/>
            <person name="Iwama A."/>
            <person name="Ishikawa T."/>
            <person name="Jakt M."/>
            <person name="Kanapin A."/>
            <person name="Katoh M."/>
            <person name="Kawasawa Y."/>
            <person name="Kelso J."/>
            <person name="Kitamura H."/>
            <person name="Kitano H."/>
            <person name="Kollias G."/>
            <person name="Krishnan S.P."/>
            <person name="Kruger A."/>
            <person name="Kummerfeld S.K."/>
            <person name="Kurochkin I.V."/>
            <person name="Lareau L.F."/>
            <person name="Lazarevic D."/>
            <person name="Lipovich L."/>
            <person name="Liu J."/>
            <person name="Liuni S."/>
            <person name="McWilliam S."/>
            <person name="Madan Babu M."/>
            <person name="Madera M."/>
            <person name="Marchionni L."/>
            <person name="Matsuda H."/>
            <person name="Matsuzawa S."/>
            <person name="Miki H."/>
            <person name="Mignone F."/>
            <person name="Miyake S."/>
            <person name="Morris K."/>
            <person name="Mottagui-Tabar S."/>
            <person name="Mulder N."/>
            <person name="Nakano N."/>
            <person name="Nakauchi H."/>
            <person name="Ng P."/>
            <person name="Nilsson R."/>
            <person name="Nishiguchi S."/>
            <person name="Nishikawa S."/>
            <person name="Nori F."/>
            <person name="Ohara O."/>
            <person name="Okazaki Y."/>
            <person name="Orlando V."/>
            <person name="Pang K.C."/>
            <person name="Pavan W.J."/>
            <person name="Pavesi G."/>
            <person name="Pesole G."/>
            <person name="Petrovsky N."/>
            <person name="Piazza S."/>
            <person name="Reed J."/>
            <person name="Reid J.F."/>
            <person name="Ring B.Z."/>
            <person name="Ringwald M."/>
            <person name="Rost B."/>
            <person name="Ruan Y."/>
            <person name="Salzberg S.L."/>
            <person name="Sandelin A."/>
            <person name="Schneider C."/>
            <person name="Schoenbach C."/>
            <person name="Sekiguchi K."/>
            <person name="Semple C.A."/>
            <person name="Seno S."/>
            <person name="Sessa L."/>
            <person name="Sheng Y."/>
            <person name="Shibata Y."/>
            <person name="Shimada H."/>
            <person name="Shimada K."/>
            <person name="Silva D."/>
            <person name="Sinclair B."/>
            <person name="Sperling S."/>
            <person name="Stupka E."/>
            <person name="Sugiura K."/>
            <person name="Sultana R."/>
            <person name="Takenaka Y."/>
            <person name="Taki K."/>
            <person name="Tammoja K."/>
            <person name="Tan S.L."/>
            <person name="Tang S."/>
            <person name="Taylor M.S."/>
            <person name="Tegner J."/>
            <person name="Teichmann S.A."/>
            <person name="Ueda H.R."/>
            <person name="van Nimwegen E."/>
            <person name="Verardo R."/>
            <person name="Wei C.L."/>
            <person name="Yagi K."/>
            <person name="Yamanishi H."/>
            <person name="Zabarovsky E."/>
            <person name="Zhu S."/>
            <person name="Zimmer A."/>
            <person name="Hide W."/>
            <person name="Bult C."/>
            <person name="Grimmond S.M."/>
            <person name="Teasdale R.D."/>
            <person name="Liu E.T."/>
            <person name="Brusic V."/>
            <person name="Quackenbush J."/>
            <person name="Wahlestedt C."/>
            <person name="Mattick J.S."/>
            <person name="Hume D.A."/>
            <person name="Kai C."/>
            <person name="Sasaki D."/>
            <person name="Tomaru Y."/>
            <person name="Fukuda S."/>
            <person name="Kanamori-Katayama M."/>
            <person name="Suzuki M."/>
            <person name="Aoki J."/>
            <person name="Arakawa T."/>
            <person name="Iida J."/>
            <person name="Imamura K."/>
            <person name="Itoh M."/>
            <person name="Kato T."/>
            <person name="Kawaji H."/>
            <person name="Kawagashira N."/>
            <person name="Kawashima T."/>
            <person name="Kojima M."/>
            <person name="Kondo S."/>
            <person name="Konno H."/>
            <person name="Nakano K."/>
            <person name="Ninomiya N."/>
            <person name="Nishio T."/>
            <person name="Okada M."/>
            <person name="Plessy C."/>
            <person name="Shibata K."/>
            <person name="Shiraki T."/>
            <person name="Suzuki S."/>
            <person name="Tagami M."/>
            <person name="Waki K."/>
            <person name="Watahiki A."/>
            <person name="Okamura-Oho Y."/>
            <person name="Suzuki H."/>
            <person name="Kawai J."/>
            <person name="Hayashizaki Y."/>
        </authorList>
    </citation>
    <scope>NUCLEOTIDE SEQUENCE [LARGE SCALE MRNA] (ISOFORM 1)</scope>
    <source>
        <strain>C57BL/6J</strain>
    </source>
</reference>
<reference key="2">
    <citation type="submission" date="2005-02" db="EMBL/GenBank/DDBJ databases">
        <title>Prediction of the coding sequences of mouse homologues of KIAA gene. The complete nucleotide sequences of mouse KIAA-homologous cDNAs identified by screening of terminal sequences of cDNA clones randomly sampled from size-fractionated libraries.</title>
        <authorList>
            <person name="Okazaki N."/>
            <person name="Kikuno R.F."/>
            <person name="Ohara R."/>
            <person name="Inamoto S."/>
            <person name="Nagase T."/>
            <person name="Ohara O."/>
            <person name="Koga H."/>
        </authorList>
    </citation>
    <scope>NUCLEOTIDE SEQUENCE [LARGE SCALE MRNA] (ISOFORM 2)</scope>
    <source>
        <tissue>Brain</tissue>
    </source>
</reference>
<reference key="3">
    <citation type="journal article" date="2009" name="PLoS Biol.">
        <title>Lineage-specific biology revealed by a finished genome assembly of the mouse.</title>
        <authorList>
            <person name="Church D.M."/>
            <person name="Goodstadt L."/>
            <person name="Hillier L.W."/>
            <person name="Zody M.C."/>
            <person name="Goldstein S."/>
            <person name="She X."/>
            <person name="Bult C.J."/>
            <person name="Agarwala R."/>
            <person name="Cherry J.L."/>
            <person name="DiCuccio M."/>
            <person name="Hlavina W."/>
            <person name="Kapustin Y."/>
            <person name="Meric P."/>
            <person name="Maglott D."/>
            <person name="Birtle Z."/>
            <person name="Marques A.C."/>
            <person name="Graves T."/>
            <person name="Zhou S."/>
            <person name="Teague B."/>
            <person name="Potamousis K."/>
            <person name="Churas C."/>
            <person name="Place M."/>
            <person name="Herschleb J."/>
            <person name="Runnheim R."/>
            <person name="Forrest D."/>
            <person name="Amos-Landgraf J."/>
            <person name="Schwartz D.C."/>
            <person name="Cheng Z."/>
            <person name="Lindblad-Toh K."/>
            <person name="Eichler E.E."/>
            <person name="Ponting C.P."/>
        </authorList>
    </citation>
    <scope>NUCLEOTIDE SEQUENCE [LARGE SCALE GENOMIC DNA]</scope>
    <source>
        <strain>C57BL/6J</strain>
    </source>
</reference>
<reference key="4">
    <citation type="submission" date="2005-07" db="EMBL/GenBank/DDBJ databases">
        <authorList>
            <person name="Mural R.J."/>
            <person name="Adams M.D."/>
            <person name="Myers E.W."/>
            <person name="Smith H.O."/>
            <person name="Venter J.C."/>
        </authorList>
    </citation>
    <scope>NUCLEOTIDE SEQUENCE [LARGE SCALE GENOMIC DNA]</scope>
</reference>
<reference key="5">
    <citation type="journal article" date="2004" name="Genome Res.">
        <title>The status, quality, and expansion of the NIH full-length cDNA project: the Mammalian Gene Collection (MGC).</title>
        <authorList>
            <consortium name="The MGC Project Team"/>
        </authorList>
    </citation>
    <scope>NUCLEOTIDE SEQUENCE [LARGE SCALE MRNA] OF 219-876 (ISOFORM 1)</scope>
    <source>
        <tissue>Mammary gland</tissue>
    </source>
</reference>
<reference key="6">
    <citation type="journal article" date="2010" name="Cell">
        <title>A tissue-specific atlas of mouse protein phosphorylation and expression.</title>
        <authorList>
            <person name="Huttlin E.L."/>
            <person name="Jedrychowski M.P."/>
            <person name="Elias J.E."/>
            <person name="Goswami T."/>
            <person name="Rad R."/>
            <person name="Beausoleil S.A."/>
            <person name="Villen J."/>
            <person name="Haas W."/>
            <person name="Sowa M.E."/>
            <person name="Gygi S.P."/>
        </authorList>
    </citation>
    <scope>PHOSPHORYLATION [LARGE SCALE ANALYSIS] AT SER-609 AND SER-613</scope>
    <scope>IDENTIFICATION BY MASS SPECTROMETRY [LARGE SCALE ANALYSIS]</scope>
    <source>
        <tissue>Spleen</tissue>
    </source>
</reference>
<accession>Q3UFT3</accession>
<accession>G5E8B7</accession>
<accession>Q3TSA2</accession>
<accession>Q5DTF6</accession>
<accession>Q80V96</accession>
<organism>
    <name type="scientific">Mus musculus</name>
    <name type="common">Mouse</name>
    <dbReference type="NCBI Taxonomy" id="10090"/>
    <lineage>
        <taxon>Eukaryota</taxon>
        <taxon>Metazoa</taxon>
        <taxon>Chordata</taxon>
        <taxon>Craniata</taxon>
        <taxon>Vertebrata</taxon>
        <taxon>Euteleostomi</taxon>
        <taxon>Mammalia</taxon>
        <taxon>Eutheria</taxon>
        <taxon>Euarchontoglires</taxon>
        <taxon>Glires</taxon>
        <taxon>Rodentia</taxon>
        <taxon>Myomorpha</taxon>
        <taxon>Muroidea</taxon>
        <taxon>Muridae</taxon>
        <taxon>Murinae</taxon>
        <taxon>Mus</taxon>
        <taxon>Mus</taxon>
    </lineage>
</organism>
<proteinExistence type="evidence at protein level"/>